<protein>
    <recommendedName>
        <fullName evidence="1">Large ribosomal subunit protein uL22</fullName>
    </recommendedName>
    <alternativeName>
        <fullName evidence="2">50S ribosomal protein L22</fullName>
    </alternativeName>
</protein>
<keyword id="KW-0687">Ribonucleoprotein</keyword>
<keyword id="KW-0689">Ribosomal protein</keyword>
<keyword id="KW-0694">RNA-binding</keyword>
<keyword id="KW-0699">rRNA-binding</keyword>
<reference key="1">
    <citation type="submission" date="2006-03" db="EMBL/GenBank/DDBJ databases">
        <title>Complete sequence of chromosome of Psychrobacter cryohalolentis K5.</title>
        <authorList>
            <consortium name="US DOE Joint Genome Institute"/>
            <person name="Copeland A."/>
            <person name="Lucas S."/>
            <person name="Lapidus A."/>
            <person name="Barry K."/>
            <person name="Detter J.C."/>
            <person name="Glavina T."/>
            <person name="Hammon N."/>
            <person name="Israni S."/>
            <person name="Dalin E."/>
            <person name="Tice H."/>
            <person name="Pitluck S."/>
            <person name="Brettin T."/>
            <person name="Bruce D."/>
            <person name="Han C."/>
            <person name="Tapia R."/>
            <person name="Sims D.R."/>
            <person name="Gilna P."/>
            <person name="Schmutz J."/>
            <person name="Larimer F."/>
            <person name="Land M."/>
            <person name="Hauser L."/>
            <person name="Kyrpides N."/>
            <person name="Kim E."/>
            <person name="Richardson P."/>
        </authorList>
    </citation>
    <scope>NUCLEOTIDE SEQUENCE [LARGE SCALE GENOMIC DNA]</scope>
    <source>
        <strain>ATCC BAA-1226 / DSM 17306 / VKM B-2378 / K5</strain>
    </source>
</reference>
<comment type="function">
    <text evidence="1">This protein binds specifically to 23S rRNA; its binding is stimulated by other ribosomal proteins, e.g. L4, L17, and L20. It is important during the early stages of 50S assembly. It makes multiple contacts with different domains of the 23S rRNA in the assembled 50S subunit and ribosome (By similarity).</text>
</comment>
<comment type="function">
    <text evidence="1">The globular domain of the protein is located near the polypeptide exit tunnel on the outside of the subunit, while an extended beta-hairpin is found that lines the wall of the exit tunnel in the center of the 70S ribosome.</text>
</comment>
<comment type="subunit">
    <text evidence="1">Part of the 50S ribosomal subunit.</text>
</comment>
<comment type="similarity">
    <text evidence="1">Belongs to the universal ribosomal protein uL22 family.</text>
</comment>
<accession>Q1QDI1</accession>
<proteinExistence type="inferred from homology"/>
<name>RL22_PSYCK</name>
<feature type="chain" id="PRO_0000243190" description="Large ribosomal subunit protein uL22">
    <location>
        <begin position="1"/>
        <end position="109"/>
    </location>
</feature>
<evidence type="ECO:0000255" key="1">
    <source>
        <dbReference type="HAMAP-Rule" id="MF_01331"/>
    </source>
</evidence>
<evidence type="ECO:0000305" key="2"/>
<dbReference type="EMBL" id="CP000323">
    <property type="protein sequence ID" value="ABE74272.1"/>
    <property type="molecule type" value="Genomic_DNA"/>
</dbReference>
<dbReference type="RefSeq" id="WP_010196689.1">
    <property type="nucleotide sequence ID" value="NC_007969.1"/>
</dbReference>
<dbReference type="SMR" id="Q1QDI1"/>
<dbReference type="STRING" id="335284.Pcryo_0489"/>
<dbReference type="KEGG" id="pcr:Pcryo_0489"/>
<dbReference type="eggNOG" id="COG0091">
    <property type="taxonomic scope" value="Bacteria"/>
</dbReference>
<dbReference type="HOGENOM" id="CLU_083987_3_3_6"/>
<dbReference type="Proteomes" id="UP000002425">
    <property type="component" value="Chromosome"/>
</dbReference>
<dbReference type="GO" id="GO:0022625">
    <property type="term" value="C:cytosolic large ribosomal subunit"/>
    <property type="evidence" value="ECO:0007669"/>
    <property type="project" value="TreeGrafter"/>
</dbReference>
<dbReference type="GO" id="GO:0019843">
    <property type="term" value="F:rRNA binding"/>
    <property type="evidence" value="ECO:0007669"/>
    <property type="project" value="UniProtKB-UniRule"/>
</dbReference>
<dbReference type="GO" id="GO:0003735">
    <property type="term" value="F:structural constituent of ribosome"/>
    <property type="evidence" value="ECO:0007669"/>
    <property type="project" value="InterPro"/>
</dbReference>
<dbReference type="GO" id="GO:0006412">
    <property type="term" value="P:translation"/>
    <property type="evidence" value="ECO:0007669"/>
    <property type="project" value="UniProtKB-UniRule"/>
</dbReference>
<dbReference type="CDD" id="cd00336">
    <property type="entry name" value="Ribosomal_L22"/>
    <property type="match status" value="1"/>
</dbReference>
<dbReference type="FunFam" id="3.90.470.10:FF:000001">
    <property type="entry name" value="50S ribosomal protein L22"/>
    <property type="match status" value="1"/>
</dbReference>
<dbReference type="Gene3D" id="3.90.470.10">
    <property type="entry name" value="Ribosomal protein L22/L17"/>
    <property type="match status" value="1"/>
</dbReference>
<dbReference type="HAMAP" id="MF_01331_B">
    <property type="entry name" value="Ribosomal_uL22_B"/>
    <property type="match status" value="1"/>
</dbReference>
<dbReference type="InterPro" id="IPR001063">
    <property type="entry name" value="Ribosomal_uL22"/>
</dbReference>
<dbReference type="InterPro" id="IPR005727">
    <property type="entry name" value="Ribosomal_uL22_bac/chlpt-type"/>
</dbReference>
<dbReference type="InterPro" id="IPR047867">
    <property type="entry name" value="Ribosomal_uL22_bac/org-type"/>
</dbReference>
<dbReference type="InterPro" id="IPR018260">
    <property type="entry name" value="Ribosomal_uL22_CS"/>
</dbReference>
<dbReference type="InterPro" id="IPR036394">
    <property type="entry name" value="Ribosomal_uL22_sf"/>
</dbReference>
<dbReference type="NCBIfam" id="TIGR01044">
    <property type="entry name" value="rplV_bact"/>
    <property type="match status" value="1"/>
</dbReference>
<dbReference type="PANTHER" id="PTHR13501">
    <property type="entry name" value="CHLOROPLAST 50S RIBOSOMAL PROTEIN L22-RELATED"/>
    <property type="match status" value="1"/>
</dbReference>
<dbReference type="PANTHER" id="PTHR13501:SF8">
    <property type="entry name" value="LARGE RIBOSOMAL SUBUNIT PROTEIN UL22M"/>
    <property type="match status" value="1"/>
</dbReference>
<dbReference type="Pfam" id="PF00237">
    <property type="entry name" value="Ribosomal_L22"/>
    <property type="match status" value="1"/>
</dbReference>
<dbReference type="SUPFAM" id="SSF54843">
    <property type="entry name" value="Ribosomal protein L22"/>
    <property type="match status" value="1"/>
</dbReference>
<dbReference type="PROSITE" id="PS00464">
    <property type="entry name" value="RIBOSOMAL_L22"/>
    <property type="match status" value="1"/>
</dbReference>
<gene>
    <name evidence="1" type="primary">rplV</name>
    <name type="ordered locus">Pcryo_0489</name>
</gene>
<sequence length="109" mass="11923">MEVTAKLRGAAISAQKVRLVADEVRGKSIERALDILTYSNKKGAVFVKKCLNSAIANAENNNGLDIDTLKVSTIYVDEGITLKRILPRAKGRADRISKRTCHITIKVGE</sequence>
<organism>
    <name type="scientific">Psychrobacter cryohalolentis (strain ATCC BAA-1226 / DSM 17306 / VKM B-2378 / K5)</name>
    <dbReference type="NCBI Taxonomy" id="335284"/>
    <lineage>
        <taxon>Bacteria</taxon>
        <taxon>Pseudomonadati</taxon>
        <taxon>Pseudomonadota</taxon>
        <taxon>Gammaproteobacteria</taxon>
        <taxon>Moraxellales</taxon>
        <taxon>Moraxellaceae</taxon>
        <taxon>Psychrobacter</taxon>
    </lineage>
</organism>